<gene>
    <name evidence="2" type="primary">kdsB</name>
    <name type="ordered locus">STM0988</name>
</gene>
<dbReference type="EC" id="2.7.7.38" evidence="2"/>
<dbReference type="EMBL" id="AE006468">
    <property type="protein sequence ID" value="AAL19922.1"/>
    <property type="molecule type" value="Genomic_DNA"/>
</dbReference>
<dbReference type="RefSeq" id="NP_459963.1">
    <property type="nucleotide sequence ID" value="NC_003197.2"/>
</dbReference>
<dbReference type="RefSeq" id="WP_000011576.1">
    <property type="nucleotide sequence ID" value="NC_003197.2"/>
</dbReference>
<dbReference type="SMR" id="Q8ZQC0"/>
<dbReference type="STRING" id="99287.STM0988"/>
<dbReference type="PaxDb" id="99287-STM0988"/>
<dbReference type="GeneID" id="1252506"/>
<dbReference type="KEGG" id="stm:STM0988"/>
<dbReference type="PATRIC" id="fig|99287.12.peg.1041"/>
<dbReference type="HOGENOM" id="CLU_065038_1_0_6"/>
<dbReference type="OMA" id="FMATCAK"/>
<dbReference type="PhylomeDB" id="Q8ZQC0"/>
<dbReference type="BioCyc" id="SENT99287:STM0988-MONOMER"/>
<dbReference type="UniPathway" id="UPA00030"/>
<dbReference type="UniPathway" id="UPA00358">
    <property type="reaction ID" value="UER00476"/>
</dbReference>
<dbReference type="Proteomes" id="UP000001014">
    <property type="component" value="Chromosome"/>
</dbReference>
<dbReference type="GO" id="GO:0005829">
    <property type="term" value="C:cytosol"/>
    <property type="evidence" value="ECO:0000318"/>
    <property type="project" value="GO_Central"/>
</dbReference>
<dbReference type="GO" id="GO:0008690">
    <property type="term" value="F:3-deoxy-manno-octulosonate cytidylyltransferase activity"/>
    <property type="evidence" value="ECO:0000318"/>
    <property type="project" value="GO_Central"/>
</dbReference>
<dbReference type="GO" id="GO:0033468">
    <property type="term" value="P:CMP-keto-3-deoxy-D-manno-octulosonic acid biosynthetic process"/>
    <property type="evidence" value="ECO:0007669"/>
    <property type="project" value="UniProtKB-UniRule"/>
</dbReference>
<dbReference type="GO" id="GO:0009103">
    <property type="term" value="P:lipopolysaccharide biosynthetic process"/>
    <property type="evidence" value="ECO:0007669"/>
    <property type="project" value="UniProtKB-UniRule"/>
</dbReference>
<dbReference type="CDD" id="cd02517">
    <property type="entry name" value="CMP-KDO-Synthetase"/>
    <property type="match status" value="1"/>
</dbReference>
<dbReference type="FunFam" id="3.90.550.10:FF:000011">
    <property type="entry name" value="3-deoxy-manno-octulosonate cytidylyltransferase"/>
    <property type="match status" value="1"/>
</dbReference>
<dbReference type="Gene3D" id="3.90.550.10">
    <property type="entry name" value="Spore Coat Polysaccharide Biosynthesis Protein SpsA, Chain A"/>
    <property type="match status" value="1"/>
</dbReference>
<dbReference type="HAMAP" id="MF_00057">
    <property type="entry name" value="KdsB"/>
    <property type="match status" value="1"/>
</dbReference>
<dbReference type="InterPro" id="IPR003329">
    <property type="entry name" value="Cytidylyl_trans"/>
</dbReference>
<dbReference type="InterPro" id="IPR004528">
    <property type="entry name" value="KdsB"/>
</dbReference>
<dbReference type="InterPro" id="IPR029044">
    <property type="entry name" value="Nucleotide-diphossugar_trans"/>
</dbReference>
<dbReference type="NCBIfam" id="TIGR00466">
    <property type="entry name" value="kdsB"/>
    <property type="match status" value="1"/>
</dbReference>
<dbReference type="NCBIfam" id="NF003950">
    <property type="entry name" value="PRK05450.1-3"/>
    <property type="match status" value="1"/>
</dbReference>
<dbReference type="NCBIfam" id="NF003952">
    <property type="entry name" value="PRK05450.1-5"/>
    <property type="match status" value="1"/>
</dbReference>
<dbReference type="NCBIfam" id="NF009905">
    <property type="entry name" value="PRK13368.1"/>
    <property type="match status" value="1"/>
</dbReference>
<dbReference type="PANTHER" id="PTHR42866">
    <property type="entry name" value="3-DEOXY-MANNO-OCTULOSONATE CYTIDYLYLTRANSFERASE"/>
    <property type="match status" value="1"/>
</dbReference>
<dbReference type="PANTHER" id="PTHR42866:SF2">
    <property type="entry name" value="3-DEOXY-MANNO-OCTULOSONATE CYTIDYLYLTRANSFERASE, MITOCHONDRIAL"/>
    <property type="match status" value="1"/>
</dbReference>
<dbReference type="Pfam" id="PF02348">
    <property type="entry name" value="CTP_transf_3"/>
    <property type="match status" value="1"/>
</dbReference>
<dbReference type="SUPFAM" id="SSF53448">
    <property type="entry name" value="Nucleotide-diphospho-sugar transferases"/>
    <property type="match status" value="1"/>
</dbReference>
<sequence length="248" mass="27432">MSFVVIIPARFSSTRLPGKPLVDINGKPMIVHVLERARESGAERIIVATDHEDVARAVEAAGGEVCMTRADHQSGTERLAEVVEKCGFSDDTVIVNVQGDEPMIPAVIIRQVAENLAQRQVGMATLAVPIHSAEEAFNPNAVKVVLDAEGYALYFSRATIPWDRDRFAKSLETVGDTCLRHLGIYGYRAGFIRRYVSWQPSPLEHIEMLEQLRVLWYGEKIHVAVAKAVPGTGVDTADDLERVRAEMR</sequence>
<accession>Q8ZQC0</accession>
<reference key="1">
    <citation type="journal article" date="2001" name="Nature">
        <title>Complete genome sequence of Salmonella enterica serovar Typhimurium LT2.</title>
        <authorList>
            <person name="McClelland M."/>
            <person name="Sanderson K.E."/>
            <person name="Spieth J."/>
            <person name="Clifton S.W."/>
            <person name="Latreille P."/>
            <person name="Courtney L."/>
            <person name="Porwollik S."/>
            <person name="Ali J."/>
            <person name="Dante M."/>
            <person name="Du F."/>
            <person name="Hou S."/>
            <person name="Layman D."/>
            <person name="Leonard S."/>
            <person name="Nguyen C."/>
            <person name="Scott K."/>
            <person name="Holmes A."/>
            <person name="Grewal N."/>
            <person name="Mulvaney E."/>
            <person name="Ryan E."/>
            <person name="Sun H."/>
            <person name="Florea L."/>
            <person name="Miller W."/>
            <person name="Stoneking T."/>
            <person name="Nhan M."/>
            <person name="Waterston R."/>
            <person name="Wilson R.K."/>
        </authorList>
    </citation>
    <scope>NUCLEOTIDE SEQUENCE [LARGE SCALE GENOMIC DNA]</scope>
    <source>
        <strain>LT2 / SGSC1412 / ATCC 700720</strain>
    </source>
</reference>
<organism>
    <name type="scientific">Salmonella typhimurium (strain LT2 / SGSC1412 / ATCC 700720)</name>
    <dbReference type="NCBI Taxonomy" id="99287"/>
    <lineage>
        <taxon>Bacteria</taxon>
        <taxon>Pseudomonadati</taxon>
        <taxon>Pseudomonadota</taxon>
        <taxon>Gammaproteobacteria</taxon>
        <taxon>Enterobacterales</taxon>
        <taxon>Enterobacteriaceae</taxon>
        <taxon>Salmonella</taxon>
    </lineage>
</organism>
<evidence type="ECO:0000250" key="1"/>
<evidence type="ECO:0000255" key="2">
    <source>
        <dbReference type="HAMAP-Rule" id="MF_00057"/>
    </source>
</evidence>
<name>KDSB_SALTY</name>
<feature type="initiator methionine" description="Removed" evidence="1">
    <location>
        <position position="1"/>
    </location>
</feature>
<feature type="chain" id="PRO_0000188516" description="3-deoxy-manno-octulosonate cytidylyltransferase">
    <location>
        <begin position="2"/>
        <end position="248"/>
    </location>
</feature>
<comment type="function">
    <text evidence="2">Activates KDO (a required 8-carbon sugar) for incorporation into bacterial lipopolysaccharide in Gram-negative bacteria.</text>
</comment>
<comment type="catalytic activity">
    <reaction evidence="2">
        <text>3-deoxy-alpha-D-manno-oct-2-ulosonate + CTP = CMP-3-deoxy-beta-D-manno-octulosonate + diphosphate</text>
        <dbReference type="Rhea" id="RHEA:23448"/>
        <dbReference type="ChEBI" id="CHEBI:33019"/>
        <dbReference type="ChEBI" id="CHEBI:37563"/>
        <dbReference type="ChEBI" id="CHEBI:85986"/>
        <dbReference type="ChEBI" id="CHEBI:85987"/>
        <dbReference type="EC" id="2.7.7.38"/>
    </reaction>
</comment>
<comment type="pathway">
    <text evidence="2">Nucleotide-sugar biosynthesis; CMP-3-deoxy-D-manno-octulosonate biosynthesis; CMP-3-deoxy-D-manno-octulosonate from 3-deoxy-D-manno-octulosonate and CTP: step 1/1.</text>
</comment>
<comment type="pathway">
    <text evidence="2">Bacterial outer membrane biogenesis; lipopolysaccharide biosynthesis.</text>
</comment>
<comment type="subcellular location">
    <subcellularLocation>
        <location evidence="2">Cytoplasm</location>
    </subcellularLocation>
</comment>
<comment type="similarity">
    <text evidence="2">Belongs to the KdsB family.</text>
</comment>
<proteinExistence type="inferred from homology"/>
<protein>
    <recommendedName>
        <fullName evidence="2">3-deoxy-manno-octulosonate cytidylyltransferase</fullName>
        <ecNumber evidence="2">2.7.7.38</ecNumber>
    </recommendedName>
    <alternativeName>
        <fullName evidence="2">CMP-2-keto-3-deoxyoctulosonic acid synthase</fullName>
        <shortName evidence="2">CKS</shortName>
        <shortName evidence="2">CMP-KDO synthase</shortName>
    </alternativeName>
</protein>
<keyword id="KW-0963">Cytoplasm</keyword>
<keyword id="KW-0448">Lipopolysaccharide biosynthesis</keyword>
<keyword id="KW-0548">Nucleotidyltransferase</keyword>
<keyword id="KW-1185">Reference proteome</keyword>
<keyword id="KW-0808">Transferase</keyword>